<name>KDPA_EDWI9</name>
<feature type="chain" id="PRO_1000204785" description="Potassium-transporting ATPase potassium-binding subunit">
    <location>
        <begin position="1"/>
        <end position="565"/>
    </location>
</feature>
<feature type="transmembrane region" description="Helical" evidence="1">
    <location>
        <begin position="6"/>
        <end position="26"/>
    </location>
</feature>
<feature type="transmembrane region" description="Helical" evidence="1">
    <location>
        <begin position="63"/>
        <end position="83"/>
    </location>
</feature>
<feature type="transmembrane region" description="Helical" evidence="1">
    <location>
        <begin position="132"/>
        <end position="152"/>
    </location>
</feature>
<feature type="transmembrane region" description="Helical" evidence="1">
    <location>
        <begin position="175"/>
        <end position="195"/>
    </location>
</feature>
<feature type="transmembrane region" description="Helical" evidence="1">
    <location>
        <begin position="250"/>
        <end position="270"/>
    </location>
</feature>
<feature type="transmembrane region" description="Helical" evidence="1">
    <location>
        <begin position="283"/>
        <end position="303"/>
    </location>
</feature>
<feature type="transmembrane region" description="Helical" evidence="1">
    <location>
        <begin position="327"/>
        <end position="347"/>
    </location>
</feature>
<feature type="transmembrane region" description="Helical" evidence="1">
    <location>
        <begin position="354"/>
        <end position="374"/>
    </location>
</feature>
<feature type="transmembrane region" description="Helical" evidence="1">
    <location>
        <begin position="379"/>
        <end position="399"/>
    </location>
</feature>
<feature type="transmembrane region" description="Helical" evidence="1">
    <location>
        <begin position="418"/>
        <end position="438"/>
    </location>
</feature>
<feature type="transmembrane region" description="Helical" evidence="1">
    <location>
        <begin position="483"/>
        <end position="503"/>
    </location>
</feature>
<feature type="transmembrane region" description="Helical" evidence="1">
    <location>
        <begin position="524"/>
        <end position="544"/>
    </location>
</feature>
<evidence type="ECO:0000255" key="1">
    <source>
        <dbReference type="HAMAP-Rule" id="MF_00275"/>
    </source>
</evidence>
<dbReference type="EMBL" id="CP001600">
    <property type="protein sequence ID" value="ACR70049.1"/>
    <property type="molecule type" value="Genomic_DNA"/>
</dbReference>
<dbReference type="RefSeq" id="WP_015872145.1">
    <property type="nucleotide sequence ID" value="NC_012779.2"/>
</dbReference>
<dbReference type="SMR" id="C5BG86"/>
<dbReference type="STRING" id="67780.B6E78_06365"/>
<dbReference type="GeneID" id="69539773"/>
<dbReference type="KEGG" id="eic:NT01EI_2888"/>
<dbReference type="PATRIC" id="fig|634503.3.peg.2584"/>
<dbReference type="HOGENOM" id="CLU_018614_3_0_6"/>
<dbReference type="OrthoDB" id="9763796at2"/>
<dbReference type="Proteomes" id="UP000001485">
    <property type="component" value="Chromosome"/>
</dbReference>
<dbReference type="GO" id="GO:0005886">
    <property type="term" value="C:plasma membrane"/>
    <property type="evidence" value="ECO:0007669"/>
    <property type="project" value="UniProtKB-SubCell"/>
</dbReference>
<dbReference type="GO" id="GO:0008556">
    <property type="term" value="F:P-type potassium transmembrane transporter activity"/>
    <property type="evidence" value="ECO:0007669"/>
    <property type="project" value="InterPro"/>
</dbReference>
<dbReference type="GO" id="GO:0030955">
    <property type="term" value="F:potassium ion binding"/>
    <property type="evidence" value="ECO:0007669"/>
    <property type="project" value="UniProtKB-UniRule"/>
</dbReference>
<dbReference type="HAMAP" id="MF_00275">
    <property type="entry name" value="KdpA"/>
    <property type="match status" value="1"/>
</dbReference>
<dbReference type="InterPro" id="IPR004623">
    <property type="entry name" value="KdpA"/>
</dbReference>
<dbReference type="NCBIfam" id="TIGR00680">
    <property type="entry name" value="kdpA"/>
    <property type="match status" value="1"/>
</dbReference>
<dbReference type="PANTHER" id="PTHR30607">
    <property type="entry name" value="POTASSIUM-TRANSPORTING ATPASE A CHAIN"/>
    <property type="match status" value="1"/>
</dbReference>
<dbReference type="PANTHER" id="PTHR30607:SF2">
    <property type="entry name" value="POTASSIUM-TRANSPORTING ATPASE POTASSIUM-BINDING SUBUNIT"/>
    <property type="match status" value="1"/>
</dbReference>
<dbReference type="Pfam" id="PF03814">
    <property type="entry name" value="KdpA"/>
    <property type="match status" value="1"/>
</dbReference>
<dbReference type="PIRSF" id="PIRSF001294">
    <property type="entry name" value="K_ATPaseA"/>
    <property type="match status" value="1"/>
</dbReference>
<proteinExistence type="inferred from homology"/>
<protein>
    <recommendedName>
        <fullName evidence="1">Potassium-transporting ATPase potassium-binding subunit</fullName>
    </recommendedName>
    <alternativeName>
        <fullName evidence="1">ATP phosphohydrolase [potassium-transporting] A chain</fullName>
    </alternativeName>
    <alternativeName>
        <fullName evidence="1">Potassium-binding and translocating subunit A</fullName>
    </alternativeName>
    <alternativeName>
        <fullName evidence="1">Potassium-translocating ATPase A chain</fullName>
    </alternativeName>
</protein>
<gene>
    <name evidence="1" type="primary">kdpA</name>
    <name type="ordered locus">NT01EI_2888</name>
</gene>
<accession>C5BG86</accession>
<organism>
    <name type="scientific">Edwardsiella ictaluri (strain 93-146)</name>
    <dbReference type="NCBI Taxonomy" id="634503"/>
    <lineage>
        <taxon>Bacteria</taxon>
        <taxon>Pseudomonadati</taxon>
        <taxon>Pseudomonadota</taxon>
        <taxon>Gammaproteobacteria</taxon>
        <taxon>Enterobacterales</taxon>
        <taxon>Hafniaceae</taxon>
        <taxon>Edwardsiella</taxon>
    </lineage>
</organism>
<comment type="function">
    <text evidence="1">Part of the high-affinity ATP-driven potassium transport (or Kdp) system, which catalyzes the hydrolysis of ATP coupled with the electrogenic transport of potassium into the cytoplasm. This subunit binds the periplasmic potassium ions and delivers the ions to the membrane domain of KdpB through an intramembrane tunnel.</text>
</comment>
<comment type="subunit">
    <text evidence="1">The system is composed of three essential subunits: KdpA, KdpB and KdpC.</text>
</comment>
<comment type="subcellular location">
    <subcellularLocation>
        <location evidence="1">Cell inner membrane</location>
        <topology evidence="1">Multi-pass membrane protein</topology>
    </subcellularLocation>
</comment>
<comment type="similarity">
    <text evidence="1">Belongs to the KdpA family.</text>
</comment>
<sequence length="565" mass="59595">MFANALMLLGLLILLLLILAPLLGSLLSRLIDGEPYRAMARTENTLWRLCGVTPHEMDWRHYLLAILAFNLLGIVLLFALLMAQGLLPLNPQGFPGLRWDLALNTAVSFVTNTNWQAYSGESSLSYLSQMAGLGVQNFLSAASGIAVLFALIRAFARHADPSLGNAWVDLWRITLYVLLPLSLLLSLLFVSQGVIQNVSGYVSVTSLEGGSQLLPMGPVASQEAIKLLGTNGGGFFGANSAHPFENPTALSNLLQMVAIFLLPTALCFAFGRSVGDSRQGHALLWTMSLIFIVAAGCVMYAELQGNPHLMALGTDSNGNMEGKENRFGILASALYAVVTTAASCGAVNAMHDSFTALGGMVPMWLMQIGEVVFGGAGSGLYGMLLFVLLTVFIAGLMIGRTPEYLGKKITVFEVKMTALAILIPPALVLTGSAIALLCDAGRSAIHNPGAHGFSEVLYAFSSAANNNGSAFGGLSVNTPFYNLLLALVMLIGRFGVIIPVMAIAGALALKKRQPAGNGTLASHGALFVSLLIGTILLVGALTFIPALALGPVAEQLQNTRAHIQP</sequence>
<keyword id="KW-0997">Cell inner membrane</keyword>
<keyword id="KW-1003">Cell membrane</keyword>
<keyword id="KW-0406">Ion transport</keyword>
<keyword id="KW-0472">Membrane</keyword>
<keyword id="KW-0630">Potassium</keyword>
<keyword id="KW-0633">Potassium transport</keyword>
<keyword id="KW-0812">Transmembrane</keyword>
<keyword id="KW-1133">Transmembrane helix</keyword>
<keyword id="KW-0813">Transport</keyword>
<reference key="1">
    <citation type="submission" date="2009-03" db="EMBL/GenBank/DDBJ databases">
        <title>Complete genome sequence of Edwardsiella ictaluri 93-146.</title>
        <authorList>
            <person name="Williams M.L."/>
            <person name="Gillaspy A.F."/>
            <person name="Dyer D.W."/>
            <person name="Thune R.L."/>
            <person name="Waldbieser G.C."/>
            <person name="Schuster S.C."/>
            <person name="Gipson J."/>
            <person name="Zaitshik J."/>
            <person name="Landry C."/>
            <person name="Lawrence M.L."/>
        </authorList>
    </citation>
    <scope>NUCLEOTIDE SEQUENCE [LARGE SCALE GENOMIC DNA]</scope>
    <source>
        <strain>93-146</strain>
    </source>
</reference>